<sequence length="309" mass="35318">MPKPYVAINMAELKNEPKTFEMFASVGPKVCMVTARHPGFVGFQNHIQIGILPFGNRYGGAKMDMTKESSTVRVLQYTFWKDWKDHEEMHRQNWSYLFRLCYSCASQMIWGPWEPIYEIIYANMPINTEMTDFTAVVGKKFAEGKPLDIPVISQPYGKRVVAFAEHSVIPGKEKQFEDAIVRTLEMLKKAPGFLGAMVLKEIGVSGIGSMQFGAKGFHQVLENPGSLEPDPNNVMYSVPEAKNTPQQYIVHVEWANTDALMFGMGRVLLYPELRQVHDEVLDTLVYGPYIRILNPMMEGTFWREYLNEQ</sequence>
<keyword id="KW-0002">3D-structure</keyword>
<keyword id="KW-0963">Cytoplasm</keyword>
<keyword id="KW-0903">Direct protein sequencing</keyword>
<keyword id="KW-0408">Iron</keyword>
<keyword id="KW-0479">Metal-binding</keyword>
<keyword id="KW-0560">Oxidoreductase</keyword>
<feature type="initiator methionine" description="Removed" evidence="2">
    <location>
        <position position="1"/>
    </location>
</feature>
<feature type="chain" id="PRO_0000072042" description="Sulfur oxygenase/reductase">
    <location>
        <begin position="2"/>
        <end position="309"/>
    </location>
</feature>
<feature type="binding site" evidence="4">
    <location>
        <position position="86"/>
    </location>
    <ligand>
        <name>Fe cation</name>
        <dbReference type="ChEBI" id="CHEBI:24875"/>
    </ligand>
</feature>
<feature type="binding site" evidence="4">
    <location>
        <position position="90"/>
    </location>
    <ligand>
        <name>Fe cation</name>
        <dbReference type="ChEBI" id="CHEBI:24875"/>
    </ligand>
</feature>
<feature type="binding site" evidence="4">
    <location>
        <position position="114"/>
    </location>
    <ligand>
        <name>Fe cation</name>
        <dbReference type="ChEBI" id="CHEBI:24875"/>
    </ligand>
</feature>
<feature type="modified residue" description="Cysteine persulfide" evidence="4">
    <location>
        <position position="31"/>
    </location>
</feature>
<feature type="mutagenesis site" description="No enzyme activity. Still binds iron." evidence="3">
    <original>C</original>
    <variation>A</variation>
    <variation>S</variation>
    <location>
        <position position="31"/>
    </location>
</feature>
<feature type="mutagenesis site" description="No enzyme activity and no iron bound." evidence="3">
    <original>H</original>
    <variation>A</variation>
    <location>
        <position position="86"/>
    </location>
</feature>
<feature type="mutagenesis site" description="No enzyme activity and no iron bound." evidence="3">
    <original>H</original>
    <variation>A</variation>
    <location>
        <position position="90"/>
    </location>
</feature>
<feature type="mutagenesis site" description="10% residual activity." evidence="3">
    <original>C</original>
    <variation>A</variation>
    <location>
        <position position="101"/>
    </location>
</feature>
<feature type="mutagenesis site" description="1% residual enzyme activity, and no iron bound." evidence="3">
    <original>C</original>
    <variation>S</variation>
    <location>
        <position position="101"/>
    </location>
</feature>
<feature type="mutagenesis site" description="10% residual activity." evidence="3">
    <original>C</original>
    <variation>A</variation>
    <variation>S</variation>
    <location>
        <position position="104"/>
    </location>
</feature>
<feature type="mutagenesis site" description="No enzyme activity and no iron bound." evidence="3">
    <original>E</original>
    <variation>A</variation>
    <location>
        <position position="114"/>
    </location>
</feature>
<feature type="mutagenesis site" description="1% residual enzyme activity and 4% of wild-type levels of iron bound." evidence="3">
    <original>E</original>
    <variation>D</variation>
    <location>
        <position position="114"/>
    </location>
</feature>
<feature type="strand" evidence="5">
    <location>
        <begin position="5"/>
        <end position="14"/>
    </location>
</feature>
<feature type="helix" evidence="5">
    <location>
        <begin position="17"/>
        <end position="34"/>
    </location>
</feature>
<feature type="strand" evidence="5">
    <location>
        <begin position="40"/>
        <end position="51"/>
    </location>
</feature>
<feature type="turn" evidence="5">
    <location>
        <begin position="54"/>
        <end position="60"/>
    </location>
</feature>
<feature type="turn" evidence="5">
    <location>
        <begin position="66"/>
        <end position="68"/>
    </location>
</feature>
<feature type="strand" evidence="5">
    <location>
        <begin position="70"/>
        <end position="82"/>
    </location>
</feature>
<feature type="helix" evidence="5">
    <location>
        <begin position="83"/>
        <end position="92"/>
    </location>
</feature>
<feature type="helix" evidence="5">
    <location>
        <begin position="94"/>
        <end position="102"/>
    </location>
</feature>
<feature type="helix" evidence="5">
    <location>
        <begin position="103"/>
        <end position="107"/>
    </location>
</feature>
<feature type="strand" evidence="5">
    <location>
        <begin position="108"/>
        <end position="113"/>
    </location>
</feature>
<feature type="strand" evidence="5">
    <location>
        <begin position="115"/>
        <end position="123"/>
    </location>
</feature>
<feature type="turn" evidence="5">
    <location>
        <begin position="130"/>
        <end position="132"/>
    </location>
</feature>
<feature type="helix" evidence="5">
    <location>
        <begin position="133"/>
        <end position="142"/>
    </location>
</feature>
<feature type="helix" evidence="5">
    <location>
        <begin position="146"/>
        <end position="148"/>
    </location>
</feature>
<feature type="strand" evidence="5">
    <location>
        <begin position="156"/>
        <end position="168"/>
    </location>
</feature>
<feature type="helix" evidence="5">
    <location>
        <begin position="173"/>
        <end position="187"/>
    </location>
</feature>
<feature type="strand" evidence="5">
    <location>
        <begin position="193"/>
        <end position="204"/>
    </location>
</feature>
<feature type="turn" evidence="5">
    <location>
        <begin position="206"/>
        <end position="210"/>
    </location>
</feature>
<feature type="helix" evidence="5">
    <location>
        <begin position="214"/>
        <end position="221"/>
    </location>
</feature>
<feature type="strand" evidence="5">
    <location>
        <begin position="225"/>
        <end position="227"/>
    </location>
</feature>
<feature type="helix" evidence="5">
    <location>
        <begin position="231"/>
        <end position="233"/>
    </location>
</feature>
<feature type="helix" evidence="5">
    <location>
        <begin position="239"/>
        <end position="241"/>
    </location>
</feature>
<feature type="strand" evidence="5">
    <location>
        <begin position="244"/>
        <end position="256"/>
    </location>
</feature>
<feature type="helix" evidence="5">
    <location>
        <begin position="257"/>
        <end position="264"/>
    </location>
</feature>
<feature type="helix" evidence="5">
    <location>
        <begin position="266"/>
        <end position="269"/>
    </location>
</feature>
<feature type="helix" evidence="5">
    <location>
        <begin position="271"/>
        <end position="281"/>
    </location>
</feature>
<feature type="strand" evidence="5">
    <location>
        <begin position="284"/>
        <end position="299"/>
    </location>
</feature>
<feature type="helix" evidence="5">
    <location>
        <begin position="302"/>
        <end position="307"/>
    </location>
</feature>
<comment type="function">
    <text evidence="1">Catalyzes the simultaneous oxidation and reduction of elemental sulfur in the presence of oxygen, with sulfite and hydrogen sulfide as products.</text>
</comment>
<comment type="catalytic activity">
    <reaction>
        <text>4 sulfur + O2 + 4 H2O = 2 hydrogen sulfide + 2 sulfite + 6 H(+)</text>
        <dbReference type="Rhea" id="RHEA:13957"/>
        <dbReference type="ChEBI" id="CHEBI:15377"/>
        <dbReference type="ChEBI" id="CHEBI:15378"/>
        <dbReference type="ChEBI" id="CHEBI:15379"/>
        <dbReference type="ChEBI" id="CHEBI:17359"/>
        <dbReference type="ChEBI" id="CHEBI:26833"/>
        <dbReference type="ChEBI" id="CHEBI:29919"/>
        <dbReference type="EC" id="1.13.11.55"/>
    </reaction>
</comment>
<comment type="cofactor">
    <cofactor evidence="1">
        <name>Fe cation</name>
        <dbReference type="ChEBI" id="CHEBI:24875"/>
    </cofactor>
    <text evidence="1">Binds 1 Fe cation per subunit.</text>
</comment>
<comment type="activity regulation">
    <text evidence="1">Inhibited by zinc.</text>
</comment>
<comment type="biophysicochemical properties">
    <kinetics>
        <KM evidence="1">23 mM for sulfur (at 65 degrees Celsius, with the oxygenase reaction)</KM>
        <KM evidence="1">13 mM for sulfur (at 65 degrees Celsius, with the reductase reaction)</KM>
    </kinetics>
</comment>
<comment type="subunit">
    <text evidence="1 4">Homoicosatetramer. The resulting structure is a hollow sphere where catalysis takes place in the inside cavity.</text>
</comment>
<comment type="subcellular location">
    <subcellularLocation>
        <location>Cytoplasm</location>
    </subcellularLocation>
</comment>
<comment type="induction">
    <text>Aerobically induced.</text>
</comment>
<gene>
    <name type="primary">sor</name>
</gene>
<proteinExistence type="evidence at protein level"/>
<reference key="1">
    <citation type="journal article" date="1992" name="J. Bacteriol.">
        <title>Molecular characterization of the sor gene, which encodes the sulfur oxygenase/reductase of the thermoacidophilic Archaeum Desulfurolobus ambivalens.</title>
        <authorList>
            <person name="Kletzin A."/>
        </authorList>
    </citation>
    <scope>NUCLEOTIDE SEQUENCE [GENOMIC DNA]</scope>
    <scope>PROTEIN SEQUENCE OF 2-29</scope>
    <source>
        <strain>Lei 10 / DSM 3772 / JCM 9191</strain>
    </source>
</reference>
<reference key="2">
    <citation type="journal article" date="2004" name="Biochem. J.">
        <title>The sulphur oxygenase reductase from Acidianus ambivalens is a multimeric protein containing a low-potential mononuclear non-haem iron centre.</title>
        <authorList>
            <person name="Urich T."/>
            <person name="Bandeiras T.M."/>
            <person name="Leal S.S."/>
            <person name="Rachel R."/>
            <person name="Albrecht T."/>
            <person name="Zimmermann P."/>
            <person name="Scholz C."/>
            <person name="Teixeira M."/>
            <person name="Gomes C.M."/>
            <person name="Kletzin A."/>
        </authorList>
    </citation>
    <scope>FUNCTION</scope>
    <scope>CHARACTERIZATION</scope>
    <scope>BIOPHYSICOCHEMICAL PROPERTIES</scope>
    <scope>COFACTOR</scope>
    <scope>ACTIVITY REGULATION</scope>
    <scope>SUBUNIT</scope>
</reference>
<reference key="3">
    <citation type="journal article" date="2005" name="FEMS Microbiol. Lett.">
        <title>Identification of core active site residues of the sulfur oxygenase reductase from Acidianus ambivalens by site-directed mutagenesis.</title>
        <authorList>
            <person name="Urich T."/>
            <person name="Kroke A."/>
            <person name="Bauer C."/>
            <person name="Seyfarth K."/>
            <person name="Reuff M."/>
            <person name="Kletzin A."/>
        </authorList>
    </citation>
    <scope>MUTAGENESIS OF CYS-31; HIS-86; HIS-90; CYS-101; CYS-104 AND GLU-114</scope>
</reference>
<reference key="4">
    <citation type="journal article" date="2006" name="Science">
        <title>X-ray structure of a self-compartmentalizing sulfur cycle metalloenzyme.</title>
        <authorList>
            <person name="Urich T."/>
            <person name="Gomes C.M."/>
            <person name="Kletzin A."/>
            <person name="Frazao C."/>
        </authorList>
    </citation>
    <scope>X-RAY CRYSTALLOGRAPHY (1.7 ANGSTROMS) IN COMPLEX WITH IRON</scope>
    <scope>SUBUNIT</scope>
    <scope>SULFHYDRATION AT CYS-31</scope>
    <scope>REACTION MECHANISM</scope>
</reference>
<protein>
    <recommendedName>
        <fullName>Sulfur oxygenase/reductase</fullName>
        <ecNumber>1.13.11.55</ecNumber>
    </recommendedName>
    <alternativeName>
        <fullName>Sulfur oxygenase reductase</fullName>
        <shortName>SOR</shortName>
    </alternativeName>
</protein>
<accession>P29082</accession>
<evidence type="ECO:0000269" key="1">
    <source>
    </source>
</evidence>
<evidence type="ECO:0000269" key="2">
    <source>
    </source>
</evidence>
<evidence type="ECO:0000269" key="3">
    <source>
    </source>
</evidence>
<evidence type="ECO:0000269" key="4">
    <source>
    </source>
</evidence>
<evidence type="ECO:0007829" key="5">
    <source>
        <dbReference type="PDB" id="6QO0"/>
    </source>
</evidence>
<dbReference type="EC" id="1.13.11.55"/>
<dbReference type="EMBL" id="X56616">
    <property type="protein sequence ID" value="CAA39952.1"/>
    <property type="molecule type" value="Genomic_DNA"/>
</dbReference>
<dbReference type="PIR" id="B43331">
    <property type="entry name" value="B43331"/>
</dbReference>
<dbReference type="RefSeq" id="WP_152941501.1">
    <property type="nucleotide sequence ID" value="NZ_CP045482.1"/>
</dbReference>
<dbReference type="PDB" id="2CB2">
    <property type="method" value="X-ray"/>
    <property type="resolution" value="1.70 A"/>
    <property type="chains" value="A/B/C/D/E/F=2-309"/>
</dbReference>
<dbReference type="PDB" id="2YAV">
    <property type="method" value="X-ray"/>
    <property type="resolution" value="1.70 A"/>
    <property type="chains" value="A/B/C/D/E/F=1-308"/>
</dbReference>
<dbReference type="PDB" id="2YAW">
    <property type="method" value="X-ray"/>
    <property type="resolution" value="2.50 A"/>
    <property type="chains" value="A/B/C/D/E/F=1-308"/>
</dbReference>
<dbReference type="PDB" id="2YAX">
    <property type="method" value="X-ray"/>
    <property type="resolution" value="1.80 A"/>
    <property type="chains" value="A/B/C/D/E/F=1-308"/>
</dbReference>
<dbReference type="PDB" id="6QJC">
    <property type="method" value="X-ray"/>
    <property type="resolution" value="1.70 A"/>
    <property type="chains" value="A/B/C/D=1-309"/>
</dbReference>
<dbReference type="PDB" id="6QKA">
    <property type="method" value="X-ray"/>
    <property type="resolution" value="2.10 A"/>
    <property type="chains" value="A/B/C/D/E/F=1-308"/>
</dbReference>
<dbReference type="PDB" id="6QKM">
    <property type="method" value="X-ray"/>
    <property type="resolution" value="2.10 A"/>
    <property type="chains" value="A/B/C/D/E/F=1-308"/>
</dbReference>
<dbReference type="PDB" id="6QMV">
    <property type="method" value="X-ray"/>
    <property type="resolution" value="1.87 A"/>
    <property type="chains" value="A/B/C/D/E/F=1-308"/>
</dbReference>
<dbReference type="PDB" id="6QNE">
    <property type="method" value="X-ray"/>
    <property type="resolution" value="1.80 A"/>
    <property type="chains" value="A/B/C/D/E/F=1-308"/>
</dbReference>
<dbReference type="PDB" id="6QO0">
    <property type="method" value="X-ray"/>
    <property type="resolution" value="1.65 A"/>
    <property type="chains" value="A/B/C/D=1-308"/>
</dbReference>
<dbReference type="PDB" id="7X9W">
    <property type="method" value="EM"/>
    <property type="resolution" value="2.78 A"/>
    <property type="chains" value="A/B/C/D/E/F/G/H/I/J/K/L/M/N/O/P/Q/R/S/T/U/V/W/X=2-308"/>
</dbReference>
<dbReference type="PDBsum" id="2CB2"/>
<dbReference type="PDBsum" id="2YAV"/>
<dbReference type="PDBsum" id="2YAW"/>
<dbReference type="PDBsum" id="2YAX"/>
<dbReference type="PDBsum" id="6QJC"/>
<dbReference type="PDBsum" id="6QKA"/>
<dbReference type="PDBsum" id="6QKM"/>
<dbReference type="PDBsum" id="6QMV"/>
<dbReference type="PDBsum" id="6QNE"/>
<dbReference type="PDBsum" id="6QO0"/>
<dbReference type="PDBsum" id="7X9W"/>
<dbReference type="EMDB" id="EMD-33084"/>
<dbReference type="SMR" id="P29082"/>
<dbReference type="GeneID" id="42779582"/>
<dbReference type="KEGG" id="ag:CAA39952"/>
<dbReference type="BioCyc" id="MetaCyc:MONOMER-12389"/>
<dbReference type="BRENDA" id="1.13.11.55">
    <property type="organism ID" value="86"/>
</dbReference>
<dbReference type="EvolutionaryTrace" id="P29082"/>
<dbReference type="GO" id="GO:0005737">
    <property type="term" value="C:cytoplasm"/>
    <property type="evidence" value="ECO:0007669"/>
    <property type="project" value="UniProtKB-SubCell"/>
</dbReference>
<dbReference type="GO" id="GO:0046872">
    <property type="term" value="F:metal ion binding"/>
    <property type="evidence" value="ECO:0007669"/>
    <property type="project" value="UniProtKB-KW"/>
</dbReference>
<dbReference type="GO" id="GO:0033755">
    <property type="term" value="F:sulfur oxygenase/reductase activity"/>
    <property type="evidence" value="ECO:0007669"/>
    <property type="project" value="UniProtKB-EC"/>
</dbReference>
<dbReference type="Gene3D" id="3.30.70.100">
    <property type="match status" value="1"/>
</dbReference>
<dbReference type="InterPro" id="IPR011008">
    <property type="entry name" value="Dimeric_a/b-barrel"/>
</dbReference>
<dbReference type="InterPro" id="IPR011661">
    <property type="entry name" value="S_Oase_red"/>
</dbReference>
<dbReference type="NCBIfam" id="NF047630">
    <property type="entry name" value="SulOxRed"/>
    <property type="match status" value="1"/>
</dbReference>
<dbReference type="Pfam" id="PF07682">
    <property type="entry name" value="SOR"/>
    <property type="match status" value="1"/>
</dbReference>
<dbReference type="SUPFAM" id="SSF54909">
    <property type="entry name" value="Dimeric alpha+beta barrel"/>
    <property type="match status" value="1"/>
</dbReference>
<name>SOR_ACIAM</name>
<organism>
    <name type="scientific">Acidianus ambivalens</name>
    <name type="common">Desulfurolobus ambivalens</name>
    <dbReference type="NCBI Taxonomy" id="2283"/>
    <lineage>
        <taxon>Archaea</taxon>
        <taxon>Thermoproteota</taxon>
        <taxon>Thermoprotei</taxon>
        <taxon>Sulfolobales</taxon>
        <taxon>Sulfolobaceae</taxon>
        <taxon>Acidianus</taxon>
    </lineage>
</organism>